<keyword id="KW-0687">Ribonucleoprotein</keyword>
<keyword id="KW-0689">Ribosomal protein</keyword>
<keyword id="KW-0694">RNA-binding</keyword>
<keyword id="KW-0699">rRNA-binding</keyword>
<gene>
    <name type="primary">rpsF</name>
    <name type="ordered locus">NMA1537</name>
</gene>
<comment type="function">
    <text evidence="1">Binds together with bS18 to 16S ribosomal RNA.</text>
</comment>
<comment type="similarity">
    <text evidence="2">Belongs to the bacterial ribosomal protein bS6 family.</text>
</comment>
<sequence length="122" mass="13935">MRHYEIVFIVHPDQSEQVPAMVERYKTMIAEANGKIHRLEDWGRRQLAYPINKIHKAHYVLMNIETTPEVVEELETAFRFNDAVLRHLTIKTKHAVTEASPMLGGEKAKNLLSGASEEAVAQ</sequence>
<dbReference type="EMBL" id="AL157959">
    <property type="protein sequence ID" value="CAM08683.1"/>
    <property type="molecule type" value="Genomic_DNA"/>
</dbReference>
<dbReference type="PIR" id="D81845">
    <property type="entry name" value="D81845"/>
</dbReference>
<dbReference type="RefSeq" id="WP_002213302.1">
    <property type="nucleotide sequence ID" value="NC_003116.1"/>
</dbReference>
<dbReference type="SMR" id="Q9JU24"/>
<dbReference type="EnsemblBacteria" id="CAM08683">
    <property type="protein sequence ID" value="CAM08683"/>
    <property type="gene ID" value="NMA1537"/>
</dbReference>
<dbReference type="GeneID" id="93385877"/>
<dbReference type="KEGG" id="nma:NMA1537"/>
<dbReference type="HOGENOM" id="CLU_113441_6_1_4"/>
<dbReference type="Proteomes" id="UP000000626">
    <property type="component" value="Chromosome"/>
</dbReference>
<dbReference type="GO" id="GO:0022627">
    <property type="term" value="C:cytosolic small ribosomal subunit"/>
    <property type="evidence" value="ECO:0007669"/>
    <property type="project" value="TreeGrafter"/>
</dbReference>
<dbReference type="GO" id="GO:0070181">
    <property type="term" value="F:small ribosomal subunit rRNA binding"/>
    <property type="evidence" value="ECO:0007669"/>
    <property type="project" value="TreeGrafter"/>
</dbReference>
<dbReference type="GO" id="GO:0003735">
    <property type="term" value="F:structural constituent of ribosome"/>
    <property type="evidence" value="ECO:0007669"/>
    <property type="project" value="InterPro"/>
</dbReference>
<dbReference type="GO" id="GO:0006412">
    <property type="term" value="P:translation"/>
    <property type="evidence" value="ECO:0007669"/>
    <property type="project" value="UniProtKB-UniRule"/>
</dbReference>
<dbReference type="CDD" id="cd00473">
    <property type="entry name" value="bS6"/>
    <property type="match status" value="1"/>
</dbReference>
<dbReference type="FunFam" id="3.30.70.60:FF:000003">
    <property type="entry name" value="30S ribosomal protein S6"/>
    <property type="match status" value="1"/>
</dbReference>
<dbReference type="Gene3D" id="3.30.70.60">
    <property type="match status" value="1"/>
</dbReference>
<dbReference type="HAMAP" id="MF_00360">
    <property type="entry name" value="Ribosomal_bS6"/>
    <property type="match status" value="1"/>
</dbReference>
<dbReference type="InterPro" id="IPR000529">
    <property type="entry name" value="Ribosomal_bS6"/>
</dbReference>
<dbReference type="InterPro" id="IPR020815">
    <property type="entry name" value="Ribosomal_bS6_CS"/>
</dbReference>
<dbReference type="InterPro" id="IPR035980">
    <property type="entry name" value="Ribosomal_bS6_sf"/>
</dbReference>
<dbReference type="InterPro" id="IPR020814">
    <property type="entry name" value="Ribosomal_S6_plastid/chlpt"/>
</dbReference>
<dbReference type="InterPro" id="IPR014717">
    <property type="entry name" value="Transl_elong_EF1B/ribsomal_bS6"/>
</dbReference>
<dbReference type="NCBIfam" id="TIGR00166">
    <property type="entry name" value="S6"/>
    <property type="match status" value="1"/>
</dbReference>
<dbReference type="PANTHER" id="PTHR21011">
    <property type="entry name" value="MITOCHONDRIAL 28S RIBOSOMAL PROTEIN S6"/>
    <property type="match status" value="1"/>
</dbReference>
<dbReference type="PANTHER" id="PTHR21011:SF1">
    <property type="entry name" value="SMALL RIBOSOMAL SUBUNIT PROTEIN BS6M"/>
    <property type="match status" value="1"/>
</dbReference>
<dbReference type="Pfam" id="PF01250">
    <property type="entry name" value="Ribosomal_S6"/>
    <property type="match status" value="1"/>
</dbReference>
<dbReference type="SUPFAM" id="SSF54995">
    <property type="entry name" value="Ribosomal protein S6"/>
    <property type="match status" value="1"/>
</dbReference>
<dbReference type="PROSITE" id="PS01048">
    <property type="entry name" value="RIBOSOMAL_S6"/>
    <property type="match status" value="1"/>
</dbReference>
<protein>
    <recommendedName>
        <fullName evidence="2">Small ribosomal subunit protein bS6</fullName>
    </recommendedName>
    <alternativeName>
        <fullName>30S ribosomal protein S6</fullName>
    </alternativeName>
</protein>
<feature type="chain" id="PRO_0000176804" description="Small ribosomal subunit protein bS6">
    <location>
        <begin position="1"/>
        <end position="122"/>
    </location>
</feature>
<reference key="1">
    <citation type="journal article" date="2000" name="Nature">
        <title>Complete DNA sequence of a serogroup A strain of Neisseria meningitidis Z2491.</title>
        <authorList>
            <person name="Parkhill J."/>
            <person name="Achtman M."/>
            <person name="James K.D."/>
            <person name="Bentley S.D."/>
            <person name="Churcher C.M."/>
            <person name="Klee S.R."/>
            <person name="Morelli G."/>
            <person name="Basham D."/>
            <person name="Brown D."/>
            <person name="Chillingworth T."/>
            <person name="Davies R.M."/>
            <person name="Davis P."/>
            <person name="Devlin K."/>
            <person name="Feltwell T."/>
            <person name="Hamlin N."/>
            <person name="Holroyd S."/>
            <person name="Jagels K."/>
            <person name="Leather S."/>
            <person name="Moule S."/>
            <person name="Mungall K.L."/>
            <person name="Quail M.A."/>
            <person name="Rajandream M.A."/>
            <person name="Rutherford K.M."/>
            <person name="Simmonds M."/>
            <person name="Skelton J."/>
            <person name="Whitehead S."/>
            <person name="Spratt B.G."/>
            <person name="Barrell B.G."/>
        </authorList>
    </citation>
    <scope>NUCLEOTIDE SEQUENCE [LARGE SCALE GENOMIC DNA]</scope>
    <source>
        <strain>DSM 15465 / Z2491</strain>
    </source>
</reference>
<evidence type="ECO:0000250" key="1"/>
<evidence type="ECO:0000305" key="2"/>
<organism>
    <name type="scientific">Neisseria meningitidis serogroup A / serotype 4A (strain DSM 15465 / Z2491)</name>
    <dbReference type="NCBI Taxonomy" id="122587"/>
    <lineage>
        <taxon>Bacteria</taxon>
        <taxon>Pseudomonadati</taxon>
        <taxon>Pseudomonadota</taxon>
        <taxon>Betaproteobacteria</taxon>
        <taxon>Neisseriales</taxon>
        <taxon>Neisseriaceae</taxon>
        <taxon>Neisseria</taxon>
    </lineage>
</organism>
<accession>Q9JU24</accession>
<accession>A1ISC7</accession>
<name>RS6_NEIMA</name>
<proteinExistence type="inferred from homology"/>